<reference key="1">
    <citation type="journal article" date="2002" name="Environ. Microbiol.">
        <title>Complete genome sequence and comparative analysis of the metabolically versatile Pseudomonas putida KT2440.</title>
        <authorList>
            <person name="Nelson K.E."/>
            <person name="Weinel C."/>
            <person name="Paulsen I.T."/>
            <person name="Dodson R.J."/>
            <person name="Hilbert H."/>
            <person name="Martins dos Santos V.A.P."/>
            <person name="Fouts D.E."/>
            <person name="Gill S.R."/>
            <person name="Pop M."/>
            <person name="Holmes M."/>
            <person name="Brinkac L.M."/>
            <person name="Beanan M.J."/>
            <person name="DeBoy R.T."/>
            <person name="Daugherty S.C."/>
            <person name="Kolonay J.F."/>
            <person name="Madupu R."/>
            <person name="Nelson W.C."/>
            <person name="White O."/>
            <person name="Peterson J.D."/>
            <person name="Khouri H.M."/>
            <person name="Hance I."/>
            <person name="Chris Lee P."/>
            <person name="Holtzapple E.K."/>
            <person name="Scanlan D."/>
            <person name="Tran K."/>
            <person name="Moazzez A."/>
            <person name="Utterback T.R."/>
            <person name="Rizzo M."/>
            <person name="Lee K."/>
            <person name="Kosack D."/>
            <person name="Moestl D."/>
            <person name="Wedler H."/>
            <person name="Lauber J."/>
            <person name="Stjepandic D."/>
            <person name="Hoheisel J."/>
            <person name="Straetz M."/>
            <person name="Heim S."/>
            <person name="Kiewitz C."/>
            <person name="Eisen J.A."/>
            <person name="Timmis K.N."/>
            <person name="Duesterhoeft A."/>
            <person name="Tuemmler B."/>
            <person name="Fraser C.M."/>
        </authorList>
    </citation>
    <scope>NUCLEOTIDE SEQUENCE [LARGE SCALE GENOMIC DNA]</scope>
    <source>
        <strain>ATCC 47054 / DSM 6125 / CFBP 8728 / NCIMB 11950 / KT2440</strain>
    </source>
</reference>
<evidence type="ECO:0000255" key="1">
    <source>
        <dbReference type="HAMAP-Rule" id="MF_01013"/>
    </source>
</evidence>
<organism>
    <name type="scientific">Pseudomonas putida (strain ATCC 47054 / DSM 6125 / CFBP 8728 / NCIMB 11950 / KT2440)</name>
    <dbReference type="NCBI Taxonomy" id="160488"/>
    <lineage>
        <taxon>Bacteria</taxon>
        <taxon>Pseudomonadati</taxon>
        <taxon>Pseudomonadota</taxon>
        <taxon>Gammaproteobacteria</taxon>
        <taxon>Pseudomonadales</taxon>
        <taxon>Pseudomonadaceae</taxon>
        <taxon>Pseudomonas</taxon>
    </lineage>
</organism>
<comment type="function">
    <text evidence="1">IGPS catalyzes the conversion of PRFAR and glutamine to IGP, AICAR and glutamate. The HisF subunit catalyzes the cyclization activity that produces IGP and AICAR from PRFAR using the ammonia provided by the HisH subunit.</text>
</comment>
<comment type="catalytic activity">
    <reaction evidence="1">
        <text>5-[(5-phospho-1-deoxy-D-ribulos-1-ylimino)methylamino]-1-(5-phospho-beta-D-ribosyl)imidazole-4-carboxamide + L-glutamine = D-erythro-1-(imidazol-4-yl)glycerol 3-phosphate + 5-amino-1-(5-phospho-beta-D-ribosyl)imidazole-4-carboxamide + L-glutamate + H(+)</text>
        <dbReference type="Rhea" id="RHEA:24793"/>
        <dbReference type="ChEBI" id="CHEBI:15378"/>
        <dbReference type="ChEBI" id="CHEBI:29985"/>
        <dbReference type="ChEBI" id="CHEBI:58278"/>
        <dbReference type="ChEBI" id="CHEBI:58359"/>
        <dbReference type="ChEBI" id="CHEBI:58475"/>
        <dbReference type="ChEBI" id="CHEBI:58525"/>
        <dbReference type="EC" id="4.3.2.10"/>
    </reaction>
</comment>
<comment type="pathway">
    <text evidence="1">Amino-acid biosynthesis; L-histidine biosynthesis; L-histidine from 5-phospho-alpha-D-ribose 1-diphosphate: step 5/9.</text>
</comment>
<comment type="subunit">
    <text evidence="1">Heterodimer of HisH and HisF.</text>
</comment>
<comment type="subcellular location">
    <subcellularLocation>
        <location evidence="1">Cytoplasm</location>
    </subcellularLocation>
</comment>
<comment type="similarity">
    <text evidence="1">Belongs to the HisA/HisF family.</text>
</comment>
<gene>
    <name evidence="1" type="primary">hisF</name>
    <name type="ordered locus">PP_0293</name>
</gene>
<accession>Q88R41</accession>
<keyword id="KW-0028">Amino-acid biosynthesis</keyword>
<keyword id="KW-0963">Cytoplasm</keyword>
<keyword id="KW-0368">Histidine biosynthesis</keyword>
<keyword id="KW-0456">Lyase</keyword>
<keyword id="KW-1185">Reference proteome</keyword>
<protein>
    <recommendedName>
        <fullName evidence="1">Imidazole glycerol phosphate synthase subunit HisF</fullName>
        <ecNumber evidence="1">4.3.2.10</ecNumber>
    </recommendedName>
    <alternativeName>
        <fullName evidence="1">IGP synthase cyclase subunit</fullName>
    </alternativeName>
    <alternativeName>
        <fullName evidence="1">IGP synthase subunit HisF</fullName>
    </alternativeName>
    <alternativeName>
        <fullName evidence="1">ImGP synthase subunit HisF</fullName>
        <shortName evidence="1">IGPS subunit HisF</shortName>
    </alternativeName>
</protein>
<proteinExistence type="inferred from homology"/>
<dbReference type="EC" id="4.3.2.10" evidence="1"/>
<dbReference type="EMBL" id="AE015451">
    <property type="protein sequence ID" value="AAN65924.1"/>
    <property type="molecule type" value="Genomic_DNA"/>
</dbReference>
<dbReference type="RefSeq" id="NP_742460.1">
    <property type="nucleotide sequence ID" value="NC_002947.4"/>
</dbReference>
<dbReference type="RefSeq" id="WP_003255729.1">
    <property type="nucleotide sequence ID" value="NZ_CP169744.1"/>
</dbReference>
<dbReference type="SMR" id="Q88R41"/>
<dbReference type="STRING" id="160488.PP_0293"/>
<dbReference type="PaxDb" id="160488-PP_0293"/>
<dbReference type="GeneID" id="83677566"/>
<dbReference type="KEGG" id="ppu:PP_0293"/>
<dbReference type="PATRIC" id="fig|160488.4.peg.318"/>
<dbReference type="eggNOG" id="COG0107">
    <property type="taxonomic scope" value="Bacteria"/>
</dbReference>
<dbReference type="HOGENOM" id="CLU_048577_4_0_6"/>
<dbReference type="OrthoDB" id="9781903at2"/>
<dbReference type="PhylomeDB" id="Q88R41"/>
<dbReference type="BioCyc" id="PPUT160488:G1G01-324-MONOMER"/>
<dbReference type="UniPathway" id="UPA00031">
    <property type="reaction ID" value="UER00010"/>
</dbReference>
<dbReference type="Proteomes" id="UP000000556">
    <property type="component" value="Chromosome"/>
</dbReference>
<dbReference type="GO" id="GO:0005737">
    <property type="term" value="C:cytoplasm"/>
    <property type="evidence" value="ECO:0007669"/>
    <property type="project" value="UniProtKB-SubCell"/>
</dbReference>
<dbReference type="GO" id="GO:0000107">
    <property type="term" value="F:imidazoleglycerol-phosphate synthase activity"/>
    <property type="evidence" value="ECO:0007669"/>
    <property type="project" value="UniProtKB-UniRule"/>
</dbReference>
<dbReference type="GO" id="GO:0016829">
    <property type="term" value="F:lyase activity"/>
    <property type="evidence" value="ECO:0007669"/>
    <property type="project" value="UniProtKB-KW"/>
</dbReference>
<dbReference type="GO" id="GO:0000105">
    <property type="term" value="P:L-histidine biosynthetic process"/>
    <property type="evidence" value="ECO:0007669"/>
    <property type="project" value="UniProtKB-UniRule"/>
</dbReference>
<dbReference type="CDD" id="cd04731">
    <property type="entry name" value="HisF"/>
    <property type="match status" value="1"/>
</dbReference>
<dbReference type="FunFam" id="3.20.20.70:FF:000006">
    <property type="entry name" value="Imidazole glycerol phosphate synthase subunit HisF"/>
    <property type="match status" value="1"/>
</dbReference>
<dbReference type="Gene3D" id="3.20.20.70">
    <property type="entry name" value="Aldolase class I"/>
    <property type="match status" value="1"/>
</dbReference>
<dbReference type="HAMAP" id="MF_01013">
    <property type="entry name" value="HisF"/>
    <property type="match status" value="1"/>
</dbReference>
<dbReference type="InterPro" id="IPR013785">
    <property type="entry name" value="Aldolase_TIM"/>
</dbReference>
<dbReference type="InterPro" id="IPR006062">
    <property type="entry name" value="His_biosynth"/>
</dbReference>
<dbReference type="InterPro" id="IPR004651">
    <property type="entry name" value="HisF"/>
</dbReference>
<dbReference type="InterPro" id="IPR050064">
    <property type="entry name" value="IGPS_HisA/HisF"/>
</dbReference>
<dbReference type="InterPro" id="IPR011060">
    <property type="entry name" value="RibuloseP-bd_barrel"/>
</dbReference>
<dbReference type="NCBIfam" id="TIGR00735">
    <property type="entry name" value="hisF"/>
    <property type="match status" value="1"/>
</dbReference>
<dbReference type="PANTHER" id="PTHR21235:SF2">
    <property type="entry name" value="IMIDAZOLE GLYCEROL PHOSPHATE SYNTHASE HISHF"/>
    <property type="match status" value="1"/>
</dbReference>
<dbReference type="PANTHER" id="PTHR21235">
    <property type="entry name" value="IMIDAZOLE GLYCEROL PHOSPHATE SYNTHASE SUBUNIT HISF/H IGP SYNTHASE SUBUNIT HISF/H"/>
    <property type="match status" value="1"/>
</dbReference>
<dbReference type="Pfam" id="PF00977">
    <property type="entry name" value="His_biosynth"/>
    <property type="match status" value="1"/>
</dbReference>
<dbReference type="SUPFAM" id="SSF51366">
    <property type="entry name" value="Ribulose-phoshate binding barrel"/>
    <property type="match status" value="1"/>
</dbReference>
<feature type="chain" id="PRO_0000142209" description="Imidazole glycerol phosphate synthase subunit HisF">
    <location>
        <begin position="1"/>
        <end position="256"/>
    </location>
</feature>
<feature type="active site" evidence="1">
    <location>
        <position position="12"/>
    </location>
</feature>
<feature type="active site" evidence="1">
    <location>
        <position position="131"/>
    </location>
</feature>
<sequence length="256" mass="27131">MALAKRIIPCLDVDNGRVVKGVKFENIRDAGDPVEIARRYDEQGADEITFLDITASVDGRDTTLHTVERMASQVFIPLTVGGGVRTVQDIRNLLNAGADKVSINTAAVFNPEFVGEAADRFGSQCIVVAIDAKKVSGPGEAPRWEIFTHGGRKPTGLDAVEWAKKMEGLGAGEILLTSMDQDGMKNGFDLGVTRAISDALGIPVIASGGVGNLQHLADGILEGHASAVLAASIFHFGEYTVPEAKAYMASRGIVVR</sequence>
<name>HIS6_PSEPK</name>